<proteinExistence type="evidence at transcript level"/>
<organism>
    <name type="scientific">Hydra vulgaris</name>
    <name type="common">Hydra</name>
    <name type="synonym">Hydra attenuata</name>
    <dbReference type="NCBI Taxonomy" id="6087"/>
    <lineage>
        <taxon>Eukaryota</taxon>
        <taxon>Metazoa</taxon>
        <taxon>Cnidaria</taxon>
        <taxon>Hydrozoa</taxon>
        <taxon>Hydroidolina</taxon>
        <taxon>Anthoathecata</taxon>
        <taxon>Aplanulata</taxon>
        <taxon>Hydridae</taxon>
        <taxon>Hydra</taxon>
    </lineage>
</organism>
<comment type="function">
    <text>Ras proteins bind GDP/GTP and possess intrinsic GTPase activity.</text>
</comment>
<comment type="catalytic activity">
    <reaction evidence="2">
        <text>GTP + H2O = GDP + phosphate + H(+)</text>
        <dbReference type="Rhea" id="RHEA:19669"/>
        <dbReference type="ChEBI" id="CHEBI:15377"/>
        <dbReference type="ChEBI" id="CHEBI:15378"/>
        <dbReference type="ChEBI" id="CHEBI:37565"/>
        <dbReference type="ChEBI" id="CHEBI:43474"/>
        <dbReference type="ChEBI" id="CHEBI:58189"/>
        <dbReference type="EC" id="3.6.5.2"/>
    </reaction>
</comment>
<comment type="activity regulation">
    <text>Alternates between an inactive form bound to GDP and an active form bound to GTP. Activated by a guanine nucleotide-exchange factor (GEF) and inactivated by a GTPase-activating protein (GAP).</text>
</comment>
<comment type="subcellular location">
    <subcellularLocation>
        <location evidence="3">Cell membrane</location>
        <topology evidence="3">Lipid-anchor</topology>
        <orientation evidence="3">Cytoplasmic side</orientation>
    </subcellularLocation>
</comment>
<comment type="similarity">
    <text evidence="3">Belongs to the small GTPase superfamily. Ras family.</text>
</comment>
<feature type="chain" id="PRO_0000082670" description="Ras-like protein RAS1">
    <location>
        <begin position="1"/>
        <end position="191"/>
    </location>
</feature>
<feature type="propeptide" id="PRO_0000281318" description="Removed in mature form" evidence="1">
    <location>
        <begin position="192"/>
        <end position="194"/>
    </location>
</feature>
<feature type="short sequence motif" description="Effector region">
    <location>
        <begin position="38"/>
        <end position="46"/>
    </location>
</feature>
<feature type="binding site" evidence="1">
    <location>
        <begin position="16"/>
        <end position="23"/>
    </location>
    <ligand>
        <name>GTP</name>
        <dbReference type="ChEBI" id="CHEBI:37565"/>
    </ligand>
</feature>
<feature type="binding site" evidence="1">
    <location>
        <begin position="63"/>
        <end position="67"/>
    </location>
    <ligand>
        <name>GTP</name>
        <dbReference type="ChEBI" id="CHEBI:37565"/>
    </ligand>
</feature>
<feature type="binding site" evidence="1">
    <location>
        <begin position="122"/>
        <end position="125"/>
    </location>
    <ligand>
        <name>GTP</name>
        <dbReference type="ChEBI" id="CHEBI:37565"/>
    </ligand>
</feature>
<feature type="modified residue" description="Cysteine methyl ester" evidence="1">
    <location>
        <position position="191"/>
    </location>
</feature>
<feature type="lipid moiety-binding region" description="S-geranylgeranyl cysteine" evidence="1">
    <location>
        <position position="191"/>
    </location>
</feature>
<gene>
    <name type="primary">RAS1</name>
</gene>
<evidence type="ECO:0000250" key="1"/>
<evidence type="ECO:0000250" key="2">
    <source>
        <dbReference type="UniProtKB" id="P01112"/>
    </source>
</evidence>
<evidence type="ECO:0000305" key="3"/>
<keyword id="KW-1003">Cell membrane</keyword>
<keyword id="KW-0342">GTP-binding</keyword>
<keyword id="KW-0378">Hydrolase</keyword>
<keyword id="KW-0449">Lipoprotein</keyword>
<keyword id="KW-0472">Membrane</keyword>
<keyword id="KW-0488">Methylation</keyword>
<keyword id="KW-0547">Nucleotide-binding</keyword>
<keyword id="KW-0636">Prenylation</keyword>
<keyword id="KW-1185">Reference proteome</keyword>
<dbReference type="EC" id="3.6.5.2" evidence="2"/>
<dbReference type="EMBL" id="X78597">
    <property type="protein sequence ID" value="CAA55332.1"/>
    <property type="molecule type" value="mRNA"/>
</dbReference>
<dbReference type="RefSeq" id="NP_001296618.1">
    <property type="nucleotide sequence ID" value="NM_001309689.1"/>
</dbReference>
<dbReference type="SMR" id="P51539"/>
<dbReference type="EnsemblMetazoa" id="NM_001309689.1">
    <property type="protein sequence ID" value="NP_001296618.1"/>
    <property type="gene ID" value="LOC100209445"/>
</dbReference>
<dbReference type="GeneID" id="100209445"/>
<dbReference type="KEGG" id="hmg:100209445"/>
<dbReference type="OrthoDB" id="5976022at2759"/>
<dbReference type="Proteomes" id="UP000694840">
    <property type="component" value="Unplaced"/>
</dbReference>
<dbReference type="GO" id="GO:0005886">
    <property type="term" value="C:plasma membrane"/>
    <property type="evidence" value="ECO:0007669"/>
    <property type="project" value="UniProtKB-SubCell"/>
</dbReference>
<dbReference type="GO" id="GO:0003925">
    <property type="term" value="F:G protein activity"/>
    <property type="evidence" value="ECO:0007669"/>
    <property type="project" value="UniProtKB-EC"/>
</dbReference>
<dbReference type="GO" id="GO:0005525">
    <property type="term" value="F:GTP binding"/>
    <property type="evidence" value="ECO:0007669"/>
    <property type="project" value="UniProtKB-KW"/>
</dbReference>
<dbReference type="GO" id="GO:0007165">
    <property type="term" value="P:signal transduction"/>
    <property type="evidence" value="ECO:0007669"/>
    <property type="project" value="InterPro"/>
</dbReference>
<dbReference type="CDD" id="cd04138">
    <property type="entry name" value="H_N_K_Ras_like"/>
    <property type="match status" value="1"/>
</dbReference>
<dbReference type="FunFam" id="3.40.50.300:FF:000080">
    <property type="entry name" value="Ras-like GTPase Ras1"/>
    <property type="match status" value="1"/>
</dbReference>
<dbReference type="Gene3D" id="3.40.50.300">
    <property type="entry name" value="P-loop containing nucleotide triphosphate hydrolases"/>
    <property type="match status" value="1"/>
</dbReference>
<dbReference type="InterPro" id="IPR027417">
    <property type="entry name" value="P-loop_NTPase"/>
</dbReference>
<dbReference type="InterPro" id="IPR005225">
    <property type="entry name" value="Small_GTP-bd"/>
</dbReference>
<dbReference type="InterPro" id="IPR001806">
    <property type="entry name" value="Small_GTPase"/>
</dbReference>
<dbReference type="InterPro" id="IPR020849">
    <property type="entry name" value="Small_GTPase_Ras-type"/>
</dbReference>
<dbReference type="NCBIfam" id="TIGR00231">
    <property type="entry name" value="small_GTP"/>
    <property type="match status" value="1"/>
</dbReference>
<dbReference type="PANTHER" id="PTHR24070">
    <property type="entry name" value="RAS, DI-RAS, AND RHEB FAMILY MEMBERS OF SMALL GTPASE SUPERFAMILY"/>
    <property type="match status" value="1"/>
</dbReference>
<dbReference type="Pfam" id="PF00071">
    <property type="entry name" value="Ras"/>
    <property type="match status" value="1"/>
</dbReference>
<dbReference type="PRINTS" id="PR00449">
    <property type="entry name" value="RASTRNSFRMNG"/>
</dbReference>
<dbReference type="SMART" id="SM00175">
    <property type="entry name" value="RAB"/>
    <property type="match status" value="1"/>
</dbReference>
<dbReference type="SMART" id="SM00176">
    <property type="entry name" value="RAN"/>
    <property type="match status" value="1"/>
</dbReference>
<dbReference type="SMART" id="SM00173">
    <property type="entry name" value="RAS"/>
    <property type="match status" value="1"/>
</dbReference>
<dbReference type="SMART" id="SM00174">
    <property type="entry name" value="RHO"/>
    <property type="match status" value="1"/>
</dbReference>
<dbReference type="SUPFAM" id="SSF52540">
    <property type="entry name" value="P-loop containing nucleoside triphosphate hydrolases"/>
    <property type="match status" value="1"/>
</dbReference>
<dbReference type="PROSITE" id="PS51421">
    <property type="entry name" value="RAS"/>
    <property type="match status" value="1"/>
</dbReference>
<name>RAS1_HYDVU</name>
<reference key="1">
    <citation type="submission" date="1997-12" db="EMBL/GenBank/DDBJ databases">
        <authorList>
            <person name="Guaderrama M."/>
            <person name="Bosch T.C.G."/>
            <person name="Salgado L.M."/>
        </authorList>
    </citation>
    <scope>NUCLEOTIDE SEQUENCE [MRNA]</scope>
    <source>
        <strain>105</strain>
    </source>
</reference>
<reference key="2">
    <citation type="journal article" date="1995" name="Gene">
        <title>Cloning of a ras-related gene from Hydra which responds to head-specific signals.</title>
        <authorList>
            <person name="Bosch T.C.G."/>
            <person name="Benitez E."/>
            <person name="Gellner K."/>
            <person name="Praetzel G."/>
            <person name="Salgado L.M."/>
        </authorList>
    </citation>
    <scope>PRELIMINARY NUCLEOTIDE SEQUENCE OF 25-167</scope>
    <source>
        <strain>105</strain>
    </source>
</reference>
<sequence length="194" mass="21584">MSSSSEPTKFKMVVVGAGGVGKSALTIQLIQNHFVEDYDPTIEDSYIKQVVVDGAICILDILDTAGQEEYSAMREHYMRTGEGFLCIFAVTSLKSFQEIDNFRTQALRVKDADKVPMVLVGNKVDLPKRDVSTKDGNDKALSFGIPYVETSAKTKQGVEEAFFTLVREILADRRNQEGQKKSDSKRAKFKCTLL</sequence>
<accession>P51539</accession>
<protein>
    <recommendedName>
        <fullName>Ras-like protein RAS1</fullName>
        <ecNumber evidence="2">3.6.5.2</ecNumber>
    </recommendedName>
</protein>